<accession>Q8D2P4</accession>
<feature type="chain" id="PRO_0000359094" description="Acetyl-coenzyme A carboxylase carboxyl transferase subunit beta">
    <location>
        <begin position="1"/>
        <end position="286"/>
    </location>
</feature>
<feature type="domain" description="CoA carboxyltransferase N-terminal" evidence="2">
    <location>
        <begin position="23"/>
        <end position="286"/>
    </location>
</feature>
<feature type="zinc finger region" description="C4-type" evidence="1">
    <location>
        <begin position="27"/>
        <end position="49"/>
    </location>
</feature>
<feature type="binding site" evidence="1">
    <location>
        <position position="27"/>
    </location>
    <ligand>
        <name>Zn(2+)</name>
        <dbReference type="ChEBI" id="CHEBI:29105"/>
    </ligand>
</feature>
<feature type="binding site" evidence="1">
    <location>
        <position position="30"/>
    </location>
    <ligand>
        <name>Zn(2+)</name>
        <dbReference type="ChEBI" id="CHEBI:29105"/>
    </ligand>
</feature>
<feature type="binding site" evidence="1">
    <location>
        <position position="46"/>
    </location>
    <ligand>
        <name>Zn(2+)</name>
        <dbReference type="ChEBI" id="CHEBI:29105"/>
    </ligand>
</feature>
<feature type="binding site" evidence="1">
    <location>
        <position position="49"/>
    </location>
    <ligand>
        <name>Zn(2+)</name>
        <dbReference type="ChEBI" id="CHEBI:29105"/>
    </ligand>
</feature>
<dbReference type="EC" id="2.1.3.15" evidence="1"/>
<dbReference type="EMBL" id="BA000021">
    <property type="protein sequence ID" value="BAC24456.1"/>
    <property type="molecule type" value="Genomic_DNA"/>
</dbReference>
<dbReference type="SMR" id="Q8D2P4"/>
<dbReference type="STRING" id="36870.gene:10368806"/>
<dbReference type="KEGG" id="wbr:accD"/>
<dbReference type="eggNOG" id="COG0777">
    <property type="taxonomic scope" value="Bacteria"/>
</dbReference>
<dbReference type="HOGENOM" id="CLU_015486_1_0_6"/>
<dbReference type="OrthoDB" id="9772975at2"/>
<dbReference type="UniPathway" id="UPA00655">
    <property type="reaction ID" value="UER00711"/>
</dbReference>
<dbReference type="Proteomes" id="UP000000562">
    <property type="component" value="Chromosome"/>
</dbReference>
<dbReference type="GO" id="GO:0009329">
    <property type="term" value="C:acetate CoA-transferase complex"/>
    <property type="evidence" value="ECO:0007669"/>
    <property type="project" value="TreeGrafter"/>
</dbReference>
<dbReference type="GO" id="GO:0003989">
    <property type="term" value="F:acetyl-CoA carboxylase activity"/>
    <property type="evidence" value="ECO:0007669"/>
    <property type="project" value="InterPro"/>
</dbReference>
<dbReference type="GO" id="GO:0005524">
    <property type="term" value="F:ATP binding"/>
    <property type="evidence" value="ECO:0007669"/>
    <property type="project" value="UniProtKB-KW"/>
</dbReference>
<dbReference type="GO" id="GO:0016743">
    <property type="term" value="F:carboxyl- or carbamoyltransferase activity"/>
    <property type="evidence" value="ECO:0007669"/>
    <property type="project" value="UniProtKB-UniRule"/>
</dbReference>
<dbReference type="GO" id="GO:0008270">
    <property type="term" value="F:zinc ion binding"/>
    <property type="evidence" value="ECO:0007669"/>
    <property type="project" value="UniProtKB-UniRule"/>
</dbReference>
<dbReference type="GO" id="GO:0006633">
    <property type="term" value="P:fatty acid biosynthetic process"/>
    <property type="evidence" value="ECO:0007669"/>
    <property type="project" value="UniProtKB-KW"/>
</dbReference>
<dbReference type="GO" id="GO:2001295">
    <property type="term" value="P:malonyl-CoA biosynthetic process"/>
    <property type="evidence" value="ECO:0007669"/>
    <property type="project" value="UniProtKB-UniRule"/>
</dbReference>
<dbReference type="Gene3D" id="3.90.226.10">
    <property type="entry name" value="2-enoyl-CoA Hydratase, Chain A, domain 1"/>
    <property type="match status" value="1"/>
</dbReference>
<dbReference type="HAMAP" id="MF_01395">
    <property type="entry name" value="AcetylCoA_CT_beta"/>
    <property type="match status" value="1"/>
</dbReference>
<dbReference type="InterPro" id="IPR034733">
    <property type="entry name" value="AcCoA_carboxyl_beta"/>
</dbReference>
<dbReference type="InterPro" id="IPR000438">
    <property type="entry name" value="Acetyl_CoA_COase_Trfase_b_su"/>
</dbReference>
<dbReference type="InterPro" id="IPR029045">
    <property type="entry name" value="ClpP/crotonase-like_dom_sf"/>
</dbReference>
<dbReference type="InterPro" id="IPR011762">
    <property type="entry name" value="COA_CT_N"/>
</dbReference>
<dbReference type="InterPro" id="IPR041010">
    <property type="entry name" value="Znf-ACC"/>
</dbReference>
<dbReference type="NCBIfam" id="TIGR00515">
    <property type="entry name" value="accD"/>
    <property type="match status" value="1"/>
</dbReference>
<dbReference type="PANTHER" id="PTHR42995">
    <property type="entry name" value="ACETYL-COENZYME A CARBOXYLASE CARBOXYL TRANSFERASE SUBUNIT BETA, CHLOROPLASTIC"/>
    <property type="match status" value="1"/>
</dbReference>
<dbReference type="PANTHER" id="PTHR42995:SF5">
    <property type="entry name" value="ACETYL-COENZYME A CARBOXYLASE CARBOXYL TRANSFERASE SUBUNIT BETA, CHLOROPLASTIC"/>
    <property type="match status" value="1"/>
</dbReference>
<dbReference type="Pfam" id="PF01039">
    <property type="entry name" value="Carboxyl_trans"/>
    <property type="match status" value="1"/>
</dbReference>
<dbReference type="Pfam" id="PF17848">
    <property type="entry name" value="Zn_ribbon_ACC"/>
    <property type="match status" value="1"/>
</dbReference>
<dbReference type="PRINTS" id="PR01070">
    <property type="entry name" value="ACCCTRFRASEB"/>
</dbReference>
<dbReference type="SUPFAM" id="SSF52096">
    <property type="entry name" value="ClpP/crotonase"/>
    <property type="match status" value="1"/>
</dbReference>
<dbReference type="PROSITE" id="PS50980">
    <property type="entry name" value="COA_CT_NTER"/>
    <property type="match status" value="1"/>
</dbReference>
<reference key="1">
    <citation type="journal article" date="2002" name="Nat. Genet.">
        <title>Genome sequence of the endocellular obligate symbiont of tsetse flies, Wigglesworthia glossinidia.</title>
        <authorList>
            <person name="Akman L."/>
            <person name="Yamashita A."/>
            <person name="Watanabe H."/>
            <person name="Oshima K."/>
            <person name="Shiba T."/>
            <person name="Hattori M."/>
            <person name="Aksoy S."/>
        </authorList>
    </citation>
    <scope>NUCLEOTIDE SEQUENCE [LARGE SCALE GENOMIC DNA]</scope>
</reference>
<comment type="function">
    <text evidence="1">Component of the acetyl coenzyme A carboxylase (ACC) complex. Biotin carboxylase (BC) catalyzes the carboxylation of biotin on its carrier protein (BCCP) and then the CO(2) group is transferred by the transcarboxylase to acetyl-CoA to form malonyl-CoA.</text>
</comment>
<comment type="catalytic activity">
    <reaction evidence="1">
        <text>N(6)-carboxybiotinyl-L-lysyl-[protein] + acetyl-CoA = N(6)-biotinyl-L-lysyl-[protein] + malonyl-CoA</text>
        <dbReference type="Rhea" id="RHEA:54728"/>
        <dbReference type="Rhea" id="RHEA-COMP:10505"/>
        <dbReference type="Rhea" id="RHEA-COMP:10506"/>
        <dbReference type="ChEBI" id="CHEBI:57288"/>
        <dbReference type="ChEBI" id="CHEBI:57384"/>
        <dbReference type="ChEBI" id="CHEBI:83144"/>
        <dbReference type="ChEBI" id="CHEBI:83145"/>
        <dbReference type="EC" id="2.1.3.15"/>
    </reaction>
</comment>
<comment type="cofactor">
    <cofactor evidence="1">
        <name>Zn(2+)</name>
        <dbReference type="ChEBI" id="CHEBI:29105"/>
    </cofactor>
    <text evidence="1">Binds 1 zinc ion per subunit.</text>
</comment>
<comment type="pathway">
    <text evidence="1">Lipid metabolism; malonyl-CoA biosynthesis; malonyl-CoA from acetyl-CoA: step 1/1.</text>
</comment>
<comment type="subunit">
    <text evidence="1">Acetyl-CoA carboxylase is a heterohexamer composed of biotin carboxyl carrier protein (AccB), biotin carboxylase (AccC) and two subunits each of ACCase subunit alpha (AccA) and ACCase subunit beta (AccD).</text>
</comment>
<comment type="subcellular location">
    <subcellularLocation>
        <location evidence="1">Cytoplasm</location>
    </subcellularLocation>
</comment>
<comment type="similarity">
    <text evidence="1">Belongs to the AccD/PCCB family.</text>
</comment>
<name>ACCD_WIGBR</name>
<organism>
    <name type="scientific">Wigglesworthia glossinidia brevipalpis</name>
    <dbReference type="NCBI Taxonomy" id="36870"/>
    <lineage>
        <taxon>Bacteria</taxon>
        <taxon>Pseudomonadati</taxon>
        <taxon>Pseudomonadota</taxon>
        <taxon>Gammaproteobacteria</taxon>
        <taxon>Enterobacterales</taxon>
        <taxon>Erwiniaceae</taxon>
        <taxon>Wigglesworthia</taxon>
    </lineage>
</organism>
<evidence type="ECO:0000255" key="1">
    <source>
        <dbReference type="HAMAP-Rule" id="MF_01395"/>
    </source>
</evidence>
<evidence type="ECO:0000255" key="2">
    <source>
        <dbReference type="PROSITE-ProRule" id="PRU01136"/>
    </source>
</evidence>
<sequence>MSWIERILKKNTITKKTNIPEGIWVKCNNCNQMIYKIELEKNLEVCPKCNFHMRISARKRLEKFLDKNNILELGKNLEPKDILKFKDTKKYKDRLYIAQKLTKEKDAIIVMKGSLYKMPIVAAAFEFSFIGGSMSSVVGERFVFGVNESIKCNCPMVCFSASGGARVQEALISLMQMAKTSAALSKLRKKKIPYISVMTDPSMGGVSASIAMLGDINIAEPKALIGFAGPRVIEQTVREKLPDKFQKSEFLIQKGIIDLIIKRKNMRFSIGKLLAKITNKPEPKKE</sequence>
<gene>
    <name evidence="1" type="primary">accD</name>
    <name type="ordered locus">WIGBR3100</name>
</gene>
<proteinExistence type="inferred from homology"/>
<protein>
    <recommendedName>
        <fullName evidence="1">Acetyl-coenzyme A carboxylase carboxyl transferase subunit beta</fullName>
        <shortName evidence="1">ACCase subunit beta</shortName>
        <shortName evidence="1">Acetyl-CoA carboxylase carboxyltransferase subunit beta</shortName>
        <ecNumber evidence="1">2.1.3.15</ecNumber>
    </recommendedName>
</protein>
<keyword id="KW-0067">ATP-binding</keyword>
<keyword id="KW-0963">Cytoplasm</keyword>
<keyword id="KW-0275">Fatty acid biosynthesis</keyword>
<keyword id="KW-0276">Fatty acid metabolism</keyword>
<keyword id="KW-0444">Lipid biosynthesis</keyword>
<keyword id="KW-0443">Lipid metabolism</keyword>
<keyword id="KW-0479">Metal-binding</keyword>
<keyword id="KW-0547">Nucleotide-binding</keyword>
<keyword id="KW-1185">Reference proteome</keyword>
<keyword id="KW-0808">Transferase</keyword>
<keyword id="KW-0862">Zinc</keyword>
<keyword id="KW-0863">Zinc-finger</keyword>